<reference key="1">
    <citation type="journal article" date="2011" name="Plant Physiol.">
        <title>A peroxygenase pathway involved in the biosynthesis of epoxy Fatty acids in oat.</title>
        <authorList>
            <person name="Meesapyodsuk D."/>
            <person name="Qiu X."/>
        </authorList>
    </citation>
    <scope>NUCLEOTIDE SEQUENCE [MRNA]</scope>
    <scope>FUNCTION</scope>
    <scope>CATALYTIC ACTIVITY</scope>
    <scope>ACTIVITY REGULATION</scope>
    <scope>SUBCELLULAR LOCATION</scope>
    <scope>TISSUE SPECIFICITY</scope>
    <scope>BIOPHYSICOCHEMICAL PROPERTIES</scope>
    <source>
        <strain>cv. CDC Dancer</strain>
    </source>
</reference>
<reference key="2">
    <citation type="journal article" date="2006" name="J. Biol. Chem.">
        <title>Plant seed peroxygenase is an original heme-oxygenase with an EF-hand calcium binding motif.</title>
        <authorList>
            <person name="Hanano A."/>
            <person name="Burcklen M."/>
            <person name="Flenet M."/>
            <person name="Ivancich A."/>
            <person name="Louwagie M."/>
            <person name="Garin J."/>
            <person name="Blee E."/>
        </authorList>
    </citation>
    <scope>PROTEIN SEQUENCE OF 10-35</scope>
    <scope>FUNCTION</scope>
    <scope>CATALYTIC ACTIVITY</scope>
    <scope>SUBCELLULAR LOCATION</scope>
</reference>
<reference key="3">
    <citation type="journal article" date="2003" name="Plant J.">
        <title>Formation of plant cuticle: evidence for the occurrence of the peroxygenase pathway.</title>
        <authorList>
            <person name="Lequeu J."/>
            <person name="Fauconnier M.L."/>
            <person name="Chammai A."/>
            <person name="Bronner R."/>
            <person name="Blee E."/>
        </authorList>
    </citation>
    <scope>FUNCTION</scope>
    <scope>CATALYTIC ACTIVITY</scope>
    <scope>ACTIVITY REGULATION</scope>
</reference>
<keyword id="KW-0106">Calcium</keyword>
<keyword id="KW-0903">Direct protein sequencing</keyword>
<keyword id="KW-0256">Endoplasmic reticulum</keyword>
<keyword id="KW-0349">Heme</keyword>
<keyword id="KW-0408">Iron</keyword>
<keyword id="KW-0551">Lipid droplet</keyword>
<keyword id="KW-0472">Membrane</keyword>
<keyword id="KW-0479">Metal-binding</keyword>
<keyword id="KW-0492">Microsome</keyword>
<keyword id="KW-0560">Oxidoreductase</keyword>
<sequence length="249" mass="28107">MAEDAVVSDAVVVSDAMSSVAKGAPVTAQRPVRDDLEKHIPKPYLARALVAVDVNNPEGTKGGRHEHGQKSVLQQHVSFFDQNGDGIIYPWETFRGLRRLGFNLIVSFIVAIGIHTGLSYPTLPTWRPSLLFPVYIDRIHKAKHGSDTATFDTEGRFMPVNFENIFSKNARSQPDKLTLREIWMMTNDHRLAYDPFGWVANKGEWILLYMLAKDDEGYLPKEAIRGVYDGSLFEFLAEQRTKKAHGKQH</sequence>
<comment type="function">
    <text evidence="3 4 5">Calcium-binding peroxygenase involved in cutin monomers biosynthesis. Can catalyze epoxidation of fatty acid and sulfoxidation reactions that can proceede competitively, although in favor of the sulfoxidation. Can only use unsaturated fatty acids with double bonds in the cis configuration as substrates. The preferred substrate is oleic acid and is inactive toward ricinoleic acid. Free fatty acid and fatty acid methyl esters are effective substrate forms, but not phospholipids and acyl-CoA. Hydroperoxy-trienoic (HPOT) acids are preferred over Hydroperoxy-dienoic (HPODT) acids as oxygen donors.</text>
</comment>
<comment type="catalytic activity">
    <reaction evidence="3 4 5">
        <text>RH + ROOH = ROH + ROH.</text>
        <dbReference type="EC" id="1.11.2.3"/>
    </reaction>
</comment>
<comment type="cofactor">
    <cofactor evidence="1">
        <name>heme b</name>
        <dbReference type="ChEBI" id="CHEBI:60344"/>
    </cofactor>
    <text evidence="1">Binds 1 heme b (iron(II)-protoporphyrin IX) group.</text>
</comment>
<comment type="cofactor">
    <cofactor evidence="1">
        <name>Ca(2+)</name>
        <dbReference type="ChEBI" id="CHEBI:29108"/>
    </cofactor>
</comment>
<comment type="activity regulation">
    <text evidence="3 5">Inhibited by beta-mercaptoethanol and organophosphorothioates such as parathion or terbufos.</text>
</comment>
<comment type="biophysicochemical properties">
    <kinetics>
        <KM evidence="5">16.07 uM for 9-HPOD</KM>
        <KM evidence="5">10.42 uM for 9-HPOT</KM>
        <KM evidence="5">25.18 uM for 13-HPOD</KM>
        <KM evidence="5">7.25 uM for 13-HPOT</KM>
        <KM evidence="5">215.76 uM for cumene hydroperoxide</KM>
        <Vmax evidence="5">214.04 pmol/sec/mg enzyme toward 9-HPOD</Vmax>
        <Vmax evidence="5">188.69 pmol/sec/mg enzyme toward 9-HPOT</Vmax>
        <Vmax evidence="5">306.57 pmol/sec/mg enzyme toward 13-HPOD</Vmax>
        <Vmax evidence="5">173.49 pmol/sec/mg enzyme toward 13-HPOT</Vmax>
        <Vmax evidence="5">883.34 pmol/sec/mg enzyme toward cumene hydroperoxide</Vmax>
    </kinetics>
    <phDependence>
        <text evidence="5">Optimum pH is 7.0.</text>
    </phDependence>
    <temperatureDependence>
        <text evidence="5">Optimum temperature is 45 degrees Celsius.</text>
    </temperatureDependence>
</comment>
<comment type="subunit">
    <text evidence="1">Homodimer.</text>
</comment>
<comment type="subcellular location">
    <subcellularLocation>
        <location>Microsome membrane</location>
    </subcellularLocation>
    <subcellularLocation>
        <location>Lipid droplet</location>
    </subcellularLocation>
</comment>
<comment type="tissue specificity">
    <text evidence="5">Expressed only in developing seeds. Not detected in roots, leaves, glumes and germinating seeds.</text>
</comment>
<comment type="domain">
    <text>Transmembrane regions are predicted by sequence analysis tools, but these regions probably constitute hydrophobic domains associated to phospholipids.</text>
</comment>
<comment type="domain">
    <text>The proline-knot motif (124-133) may be involved in targeting to lipid bodies.</text>
</comment>
<comment type="similarity">
    <text evidence="6">Belongs to the caleosin family.</text>
</comment>
<evidence type="ECO:0000250" key="1"/>
<evidence type="ECO:0000255" key="2"/>
<evidence type="ECO:0000269" key="3">
    <source>
    </source>
</evidence>
<evidence type="ECO:0000269" key="4">
    <source>
    </source>
</evidence>
<evidence type="ECO:0000269" key="5">
    <source>
    </source>
</evidence>
<evidence type="ECO:0000305" key="6"/>
<protein>
    <recommendedName>
        <fullName>Peroxygenase 1</fullName>
        <shortName>AsPXG1</shortName>
        <ecNumber>1.11.2.3</ecNumber>
    </recommendedName>
</protein>
<feature type="chain" id="PRO_0000415559" description="Peroxygenase 1">
    <location>
        <begin position="1"/>
        <end position="249"/>
    </location>
</feature>
<feature type="domain" description="EF-hand">
    <location>
        <begin position="68"/>
        <end position="103"/>
    </location>
</feature>
<feature type="short sequence motif" description="Proline-knot">
    <location>
        <begin position="124"/>
        <end position="133"/>
    </location>
</feature>
<feature type="binding site" description="axial binding residue" evidence="1">
    <location>
        <position position="76"/>
    </location>
    <ligand>
        <name>heme</name>
        <dbReference type="ChEBI" id="CHEBI:30413"/>
    </ligand>
    <ligandPart>
        <name>Fe</name>
        <dbReference type="ChEBI" id="CHEBI:18248"/>
    </ligandPart>
</feature>
<feature type="binding site" evidence="2">
    <location>
        <position position="81"/>
    </location>
    <ligand>
        <name>Ca(2+)</name>
        <dbReference type="ChEBI" id="CHEBI:29108"/>
    </ligand>
</feature>
<feature type="binding site" evidence="2">
    <location>
        <position position="83"/>
    </location>
    <ligand>
        <name>Ca(2+)</name>
        <dbReference type="ChEBI" id="CHEBI:29108"/>
    </ligand>
</feature>
<feature type="binding site" evidence="2">
    <location>
        <position position="85"/>
    </location>
    <ligand>
        <name>Ca(2+)</name>
        <dbReference type="ChEBI" id="CHEBI:29108"/>
    </ligand>
</feature>
<feature type="binding site" evidence="2">
    <location>
        <position position="92"/>
    </location>
    <ligand>
        <name>Ca(2+)</name>
        <dbReference type="ChEBI" id="CHEBI:29108"/>
    </ligand>
</feature>
<accession>G1JSL4</accession>
<organism>
    <name type="scientific">Avena sativa</name>
    <name type="common">Oat</name>
    <dbReference type="NCBI Taxonomy" id="4498"/>
    <lineage>
        <taxon>Eukaryota</taxon>
        <taxon>Viridiplantae</taxon>
        <taxon>Streptophyta</taxon>
        <taxon>Embryophyta</taxon>
        <taxon>Tracheophyta</taxon>
        <taxon>Spermatophyta</taxon>
        <taxon>Magnoliopsida</taxon>
        <taxon>Liliopsida</taxon>
        <taxon>Poales</taxon>
        <taxon>Poaceae</taxon>
        <taxon>BOP clade</taxon>
        <taxon>Pooideae</taxon>
        <taxon>Poodae</taxon>
        <taxon>Poeae</taxon>
        <taxon>Poeae Chloroplast Group 1 (Aveneae type)</taxon>
        <taxon>Aveninae</taxon>
        <taxon>Avena</taxon>
    </lineage>
</organism>
<dbReference type="EC" id="1.11.2.3"/>
<dbReference type="EMBL" id="JN390966">
    <property type="protein sequence ID" value="AEL03786.1"/>
    <property type="molecule type" value="mRNA"/>
</dbReference>
<dbReference type="KEGG" id="ag:AEL03786"/>
<dbReference type="BRENDA" id="1.11.2.3">
    <property type="organism ID" value="588"/>
</dbReference>
<dbReference type="GO" id="GO:0005783">
    <property type="term" value="C:endoplasmic reticulum"/>
    <property type="evidence" value="ECO:0007669"/>
    <property type="project" value="UniProtKB-KW"/>
</dbReference>
<dbReference type="GO" id="GO:0005811">
    <property type="term" value="C:lipid droplet"/>
    <property type="evidence" value="ECO:0007669"/>
    <property type="project" value="UniProtKB-SubCell"/>
</dbReference>
<dbReference type="GO" id="GO:0016020">
    <property type="term" value="C:membrane"/>
    <property type="evidence" value="ECO:0007669"/>
    <property type="project" value="UniProtKB-KW"/>
</dbReference>
<dbReference type="GO" id="GO:0005509">
    <property type="term" value="F:calcium ion binding"/>
    <property type="evidence" value="ECO:0007669"/>
    <property type="project" value="TreeGrafter"/>
</dbReference>
<dbReference type="GO" id="GO:0004497">
    <property type="term" value="F:monooxygenase activity"/>
    <property type="evidence" value="ECO:0007669"/>
    <property type="project" value="TreeGrafter"/>
</dbReference>
<dbReference type="GO" id="GO:1990137">
    <property type="term" value="F:plant seed peroxygenase activity"/>
    <property type="evidence" value="ECO:0007669"/>
    <property type="project" value="UniProtKB-EC"/>
</dbReference>
<dbReference type="InterPro" id="IPR007736">
    <property type="entry name" value="Caleosin-related"/>
</dbReference>
<dbReference type="PANTHER" id="PTHR31495:SF14">
    <property type="entry name" value="CALEOSIN"/>
    <property type="match status" value="1"/>
</dbReference>
<dbReference type="PANTHER" id="PTHR31495">
    <property type="entry name" value="PEROXYGENASE 3-RELATED"/>
    <property type="match status" value="1"/>
</dbReference>
<dbReference type="Pfam" id="PF05042">
    <property type="entry name" value="Caleosin"/>
    <property type="match status" value="1"/>
</dbReference>
<proteinExistence type="evidence at protein level"/>
<name>PXG1_AVESA</name>